<organism>
    <name type="scientific">Homo sapiens</name>
    <name type="common">Human</name>
    <dbReference type="NCBI Taxonomy" id="9606"/>
    <lineage>
        <taxon>Eukaryota</taxon>
        <taxon>Metazoa</taxon>
        <taxon>Chordata</taxon>
        <taxon>Craniata</taxon>
        <taxon>Vertebrata</taxon>
        <taxon>Euteleostomi</taxon>
        <taxon>Mammalia</taxon>
        <taxon>Eutheria</taxon>
        <taxon>Euarchontoglires</taxon>
        <taxon>Primates</taxon>
        <taxon>Haplorrhini</taxon>
        <taxon>Catarrhini</taxon>
        <taxon>Hominidae</taxon>
        <taxon>Homo</taxon>
    </lineage>
</organism>
<name>TICN2_HUMAN</name>
<sequence>MRAPGCGRLVLPLLLLAAAALAEGDAKGLKEGETPGNFMEDEQWLSSISQYSGKIKHWNRFRDEVEDDYIKSWEDNQQGDEALDTTKDPCQKVKCSRHKVCIAQGYQRAMCISRKKLEHRIKQPTVKLHGNKDSICKPCHMAQLASVCGSDGHTYSSVCKLEQQACLSSKQLAVRCEGPCPCPTEQAATSTADGKPETCTGQDLADLGDRLRDWFQLLHENSKQNGSASSVAGPASGLDKSLGASCKDSIGWMFSKLDTSADLFLDQTELAAINLDKYEVCIRPFFNSCDTYKDGRVSTAEWCFCFWREKPPCLAELERIQIQEAAKKKPGIFIPSCDEDGYYRKMQCDQSSGDCWCVDQLGLELTGTRTHGSPDCDDIVGFSGDFGSGVGWEDEEEKETEEAGEEAEEEEGEAGEADDGGYIW</sequence>
<feature type="signal peptide" evidence="7">
    <location>
        <begin position="1"/>
        <end position="22"/>
    </location>
</feature>
<feature type="chain" id="PRO_0000026701" description="Testican-2">
    <location>
        <begin position="23"/>
        <end position="424"/>
    </location>
</feature>
<feature type="domain" description="Kazal-like" evidence="4">
    <location>
        <begin position="130"/>
        <end position="182"/>
    </location>
</feature>
<feature type="domain" description="Thyroglobulin type-1" evidence="3">
    <location>
        <begin position="310"/>
        <end position="376"/>
    </location>
</feature>
<feature type="region of interest" description="Disordered" evidence="5">
    <location>
        <begin position="387"/>
        <end position="424"/>
    </location>
</feature>
<feature type="compositionally biased region" description="Acidic residues" evidence="5">
    <location>
        <begin position="392"/>
        <end position="424"/>
    </location>
</feature>
<feature type="modified residue" description="Phosphoserine; by FAM20C" evidence="8">
    <location>
        <position position="72"/>
    </location>
</feature>
<feature type="glycosylation site" description="N-linked (GlcNAc...) asparagine" evidence="2">
    <location>
        <position position="225"/>
    </location>
</feature>
<feature type="glycosylation site" description="O-linked (Xyl...) (glycosaminoglycan) serine" evidence="2">
    <location>
        <position position="383"/>
    </location>
</feature>
<feature type="glycosylation site" description="O-linked (Xyl...) (glycosaminoglycan) serine" evidence="2">
    <location>
        <position position="388"/>
    </location>
</feature>
<feature type="disulfide bond" evidence="1">
    <location>
        <begin position="90"/>
        <end position="101"/>
    </location>
</feature>
<feature type="disulfide bond" evidence="1">
    <location>
        <begin position="95"/>
        <end position="111"/>
    </location>
</feature>
<feature type="disulfide bond" evidence="1">
    <location>
        <begin position="136"/>
        <end position="166"/>
    </location>
</feature>
<feature type="disulfide bond" evidence="1">
    <location>
        <begin position="139"/>
        <end position="159"/>
    </location>
</feature>
<feature type="disulfide bond" evidence="1">
    <location>
        <begin position="148"/>
        <end position="180"/>
    </location>
</feature>
<feature type="disulfide bond" evidence="1">
    <location>
        <begin position="313"/>
        <end position="337"/>
    </location>
</feature>
<feature type="disulfide bond" evidence="1">
    <location>
        <begin position="348"/>
        <end position="355"/>
    </location>
</feature>
<feature type="disulfide bond" evidence="1">
    <location>
        <begin position="357"/>
        <end position="376"/>
    </location>
</feature>
<feature type="splice variant" id="VSP_045668" description="In isoform 2." evidence="9">
    <original>EVEDDYIKSWEDNQ</original>
    <variation>VPSSDPPSTTQATP</variation>
    <location>
        <begin position="64"/>
        <end position="77"/>
    </location>
</feature>
<feature type="splice variant" id="VSP_045669" description="In isoform 2." evidence="9">
    <location>
        <begin position="78"/>
        <end position="424"/>
    </location>
</feature>
<feature type="sequence variant" id="VAR_022020" description="In dbSNP:rs2306322.">
    <original>G</original>
    <variation>S</variation>
    <location>
        <position position="353"/>
    </location>
</feature>
<feature type="sequence conflict" description="In Ref. 3; AAQ89280." evidence="10" ref="3">
    <original>C</original>
    <variation>R</variation>
    <location>
        <position position="357"/>
    </location>
</feature>
<protein>
    <recommendedName>
        <fullName>Testican-2</fullName>
    </recommendedName>
    <alternativeName>
        <fullName>SPARC/osteonectin, CWCV, and Kazal-like domains proteoglycan 2</fullName>
    </alternativeName>
</protein>
<comment type="function">
    <text>May participate in diverse steps of neurogenesis. Binds calcium.</text>
</comment>
<comment type="interaction">
    <interactant intactId="EBI-311086">
        <id>Q92563</id>
    </interactant>
    <interactant intactId="EBI-744099">
        <id>Q9H0I2</id>
        <label>ENKD1</label>
    </interactant>
    <organismsDiffer>false</organismsDiffer>
    <experiments>3</experiments>
</comment>
<comment type="subcellular location">
    <subcellularLocation>
        <location evidence="10">Secreted</location>
        <location evidence="10">Extracellular space</location>
        <location evidence="10">Extracellular matrix</location>
    </subcellularLocation>
</comment>
<comment type="alternative products">
    <event type="alternative splicing"/>
    <isoform>
        <id>Q92563-1</id>
        <name>1</name>
        <sequence type="displayed"/>
    </isoform>
    <isoform>
        <id>Q92563-2</id>
        <name>2</name>
        <sequence type="described" ref="VSP_045668 VSP_045669"/>
    </isoform>
</comment>
<comment type="tissue specificity">
    <text evidence="6">Highly expressed in brain. Also found in lung and testis.</text>
</comment>
<comment type="PTM">
    <text evidence="1">Contains chondroitin sulfate and heparan sulfate O-linked oligosaccharides.</text>
</comment>
<comment type="sequence caution" evidence="10">
    <conflict type="erroneous initiation">
        <sequence resource="EMBL-CDS" id="BAA13404"/>
    </conflict>
</comment>
<evidence type="ECO:0000250" key="1"/>
<evidence type="ECO:0000255" key="2"/>
<evidence type="ECO:0000255" key="3">
    <source>
        <dbReference type="PROSITE-ProRule" id="PRU00500"/>
    </source>
</evidence>
<evidence type="ECO:0000255" key="4">
    <source>
        <dbReference type="PROSITE-ProRule" id="PRU00798"/>
    </source>
</evidence>
<evidence type="ECO:0000256" key="5">
    <source>
        <dbReference type="SAM" id="MobiDB-lite"/>
    </source>
</evidence>
<evidence type="ECO:0000269" key="6">
    <source>
    </source>
</evidence>
<evidence type="ECO:0000269" key="7">
    <source>
    </source>
</evidence>
<evidence type="ECO:0000269" key="8">
    <source>
    </source>
</evidence>
<evidence type="ECO:0000303" key="9">
    <source>
    </source>
</evidence>
<evidence type="ECO:0000305" key="10"/>
<accession>Q92563</accession>
<accession>C9J767</accession>
<accession>Q6UW87</accession>
<dbReference type="EMBL" id="AJ001453">
    <property type="protein sequence ID" value="CAA04774.1"/>
    <property type="molecule type" value="mRNA"/>
</dbReference>
<dbReference type="EMBL" id="D87465">
    <property type="protein sequence ID" value="BAA13404.2"/>
    <property type="status" value="ALT_INIT"/>
    <property type="molecule type" value="mRNA"/>
</dbReference>
<dbReference type="EMBL" id="AY358921">
    <property type="protein sequence ID" value="AAQ89280.1"/>
    <property type="molecule type" value="mRNA"/>
</dbReference>
<dbReference type="EMBL" id="AK307091">
    <property type="status" value="NOT_ANNOTATED_CDS"/>
    <property type="molecule type" value="mRNA"/>
</dbReference>
<dbReference type="EMBL" id="AC022392">
    <property type="status" value="NOT_ANNOTATED_CDS"/>
    <property type="molecule type" value="Genomic_DNA"/>
</dbReference>
<dbReference type="EMBL" id="BC023558">
    <property type="protein sequence ID" value="AAH23558.1"/>
    <property type="molecule type" value="mRNA"/>
</dbReference>
<dbReference type="CCDS" id="CCDS44431.1">
    <molecule id="Q92563-2"/>
</dbReference>
<dbReference type="CCDS" id="CCDS7313.1">
    <molecule id="Q92563-1"/>
</dbReference>
<dbReference type="RefSeq" id="NP_001127906.1">
    <molecule id="Q92563-2"/>
    <property type="nucleotide sequence ID" value="NM_001134434.1"/>
</dbReference>
<dbReference type="RefSeq" id="NP_001231879.1">
    <molecule id="Q92563-1"/>
    <property type="nucleotide sequence ID" value="NM_001244950.2"/>
</dbReference>
<dbReference type="RefSeq" id="NP_055582.1">
    <molecule id="Q92563-1"/>
    <property type="nucleotide sequence ID" value="NM_014767.2"/>
</dbReference>
<dbReference type="RefSeq" id="XP_016872474.1">
    <property type="nucleotide sequence ID" value="XM_017016985.1"/>
</dbReference>
<dbReference type="SASBDB" id="Q92563"/>
<dbReference type="BioGRID" id="115146">
    <property type="interactions" value="57"/>
</dbReference>
<dbReference type="FunCoup" id="Q92563">
    <property type="interactions" value="175"/>
</dbReference>
<dbReference type="IntAct" id="Q92563">
    <property type="interactions" value="18"/>
</dbReference>
<dbReference type="STRING" id="9606.ENSP00000321108"/>
<dbReference type="MEROPS" id="I31.954"/>
<dbReference type="GlyCosmos" id="Q92563">
    <property type="glycosylation" value="5 sites, 3 glycans"/>
</dbReference>
<dbReference type="GlyGen" id="Q92563">
    <property type="glycosylation" value="7 sites, 8 N-linked glycans (1 site), 4 O-linked glycans (3 sites)"/>
</dbReference>
<dbReference type="iPTMnet" id="Q92563"/>
<dbReference type="PhosphoSitePlus" id="Q92563"/>
<dbReference type="BioMuta" id="SPOCK2"/>
<dbReference type="DMDM" id="24212500"/>
<dbReference type="jPOST" id="Q92563"/>
<dbReference type="MassIVE" id="Q92563"/>
<dbReference type="PaxDb" id="9606-ENSP00000362201"/>
<dbReference type="PeptideAtlas" id="Q92563"/>
<dbReference type="ProteomicsDB" id="75319">
    <molecule id="Q92563-1"/>
</dbReference>
<dbReference type="ProteomicsDB" id="8867"/>
<dbReference type="Antibodypedia" id="29217">
    <property type="antibodies" value="100 antibodies from 23 providers"/>
</dbReference>
<dbReference type="DNASU" id="9806"/>
<dbReference type="Ensembl" id="ENST00000317376.8">
    <molecule id="Q92563-1"/>
    <property type="protein sequence ID" value="ENSP00000321108.4"/>
    <property type="gene ID" value="ENSG00000107742.14"/>
</dbReference>
<dbReference type="Ensembl" id="ENST00000373109.7">
    <molecule id="Q92563-1"/>
    <property type="protein sequence ID" value="ENSP00000362201.2"/>
    <property type="gene ID" value="ENSG00000107742.14"/>
</dbReference>
<dbReference type="Ensembl" id="ENST00000412663.5">
    <molecule id="Q92563-2"/>
    <property type="protein sequence ID" value="ENSP00000397715.1"/>
    <property type="gene ID" value="ENSG00000107742.14"/>
</dbReference>
<dbReference type="GeneID" id="9806"/>
<dbReference type="KEGG" id="hsa:9806"/>
<dbReference type="MANE-Select" id="ENST00000373109.7">
    <property type="protein sequence ID" value="ENSP00000362201.2"/>
    <property type="RefSeq nucleotide sequence ID" value="NM_001244950.2"/>
    <property type="RefSeq protein sequence ID" value="NP_001231879.1"/>
</dbReference>
<dbReference type="UCSC" id="uc001jso.3">
    <molecule id="Q92563-1"/>
    <property type="organism name" value="human"/>
</dbReference>
<dbReference type="AGR" id="HGNC:13564"/>
<dbReference type="CTD" id="9806"/>
<dbReference type="DisGeNET" id="9806"/>
<dbReference type="GeneCards" id="SPOCK2"/>
<dbReference type="HGNC" id="HGNC:13564">
    <property type="gene designation" value="SPOCK2"/>
</dbReference>
<dbReference type="HPA" id="ENSG00000107742">
    <property type="expression patterns" value="Tissue enhanced (brain, lymphoid tissue)"/>
</dbReference>
<dbReference type="MIM" id="607988">
    <property type="type" value="gene"/>
</dbReference>
<dbReference type="neXtProt" id="NX_Q92563"/>
<dbReference type="OpenTargets" id="ENSG00000107742"/>
<dbReference type="PharmGKB" id="PA128394560"/>
<dbReference type="VEuPathDB" id="HostDB:ENSG00000107742"/>
<dbReference type="eggNOG" id="KOG3555">
    <property type="taxonomic scope" value="Eukaryota"/>
</dbReference>
<dbReference type="GeneTree" id="ENSGT00940000157107"/>
<dbReference type="HOGENOM" id="CLU_037217_1_0_1"/>
<dbReference type="InParanoid" id="Q92563"/>
<dbReference type="OMA" id="AMCINRK"/>
<dbReference type="OrthoDB" id="8875634at2759"/>
<dbReference type="PAN-GO" id="Q92563">
    <property type="GO annotations" value="0 GO annotations based on evolutionary models"/>
</dbReference>
<dbReference type="PhylomeDB" id="Q92563"/>
<dbReference type="TreeFam" id="TF317779"/>
<dbReference type="PathwayCommons" id="Q92563"/>
<dbReference type="SignaLink" id="Q92563"/>
<dbReference type="BioGRID-ORCS" id="9806">
    <property type="hits" value="13 hits in 1149 CRISPR screens"/>
</dbReference>
<dbReference type="ChiTaRS" id="SPOCK2">
    <property type="organism name" value="human"/>
</dbReference>
<dbReference type="GeneWiki" id="SPOCK2"/>
<dbReference type="GenomeRNAi" id="9806"/>
<dbReference type="Pharos" id="Q92563">
    <property type="development level" value="Tbio"/>
</dbReference>
<dbReference type="PRO" id="PR:Q92563"/>
<dbReference type="Proteomes" id="UP000005640">
    <property type="component" value="Chromosome 10"/>
</dbReference>
<dbReference type="RNAct" id="Q92563">
    <property type="molecule type" value="protein"/>
</dbReference>
<dbReference type="Bgee" id="ENSG00000107742">
    <property type="expression patterns" value="Expressed in paraflocculus and 175 other cell types or tissues"/>
</dbReference>
<dbReference type="ExpressionAtlas" id="Q92563">
    <property type="expression patterns" value="baseline and differential"/>
</dbReference>
<dbReference type="GO" id="GO:0031012">
    <property type="term" value="C:extracellular matrix"/>
    <property type="evidence" value="ECO:0000303"/>
    <property type="project" value="UniProtKB"/>
</dbReference>
<dbReference type="GO" id="GO:0005615">
    <property type="term" value="C:extracellular space"/>
    <property type="evidence" value="ECO:0000318"/>
    <property type="project" value="GO_Central"/>
</dbReference>
<dbReference type="GO" id="GO:0005509">
    <property type="term" value="F:calcium ion binding"/>
    <property type="evidence" value="ECO:0000314"/>
    <property type="project" value="UniProtKB"/>
</dbReference>
<dbReference type="GO" id="GO:0005518">
    <property type="term" value="F:collagen binding"/>
    <property type="evidence" value="ECO:0000318"/>
    <property type="project" value="GO_Central"/>
</dbReference>
<dbReference type="GO" id="GO:0050840">
    <property type="term" value="F:extracellular matrix binding"/>
    <property type="evidence" value="ECO:0000318"/>
    <property type="project" value="GO_Central"/>
</dbReference>
<dbReference type="GO" id="GO:0005539">
    <property type="term" value="F:glycosaminoglycan binding"/>
    <property type="evidence" value="ECO:0007669"/>
    <property type="project" value="Ensembl"/>
</dbReference>
<dbReference type="GO" id="GO:0008191">
    <property type="term" value="F:metalloendopeptidase inhibitor activity"/>
    <property type="evidence" value="ECO:0000304"/>
    <property type="project" value="ParkinsonsUK-UCL"/>
</dbReference>
<dbReference type="GO" id="GO:1990830">
    <property type="term" value="P:cellular response to leukemia inhibitory factor"/>
    <property type="evidence" value="ECO:0007669"/>
    <property type="project" value="Ensembl"/>
</dbReference>
<dbReference type="GO" id="GO:0030198">
    <property type="term" value="P:extracellular matrix organization"/>
    <property type="evidence" value="ECO:0000303"/>
    <property type="project" value="UniProtKB"/>
</dbReference>
<dbReference type="GO" id="GO:0010951">
    <property type="term" value="P:negative regulation of endopeptidase activity"/>
    <property type="evidence" value="ECO:0000304"/>
    <property type="project" value="ParkinsonsUK-UCL"/>
</dbReference>
<dbReference type="GO" id="GO:2000147">
    <property type="term" value="P:positive regulation of cell motility"/>
    <property type="evidence" value="ECO:0000304"/>
    <property type="project" value="ParkinsonsUK-UCL"/>
</dbReference>
<dbReference type="GO" id="GO:0010811">
    <property type="term" value="P:positive regulation of cell-substrate adhesion"/>
    <property type="evidence" value="ECO:0007669"/>
    <property type="project" value="Ensembl"/>
</dbReference>
<dbReference type="GO" id="GO:0045595">
    <property type="term" value="P:regulation of cell differentiation"/>
    <property type="evidence" value="ECO:0000303"/>
    <property type="project" value="UniProtKB"/>
</dbReference>
<dbReference type="GO" id="GO:0007416">
    <property type="term" value="P:synapse assembly"/>
    <property type="evidence" value="ECO:0000303"/>
    <property type="project" value="UniProtKB"/>
</dbReference>
<dbReference type="CDD" id="cd16238">
    <property type="entry name" value="EFh_SPARC_TICN2"/>
    <property type="match status" value="1"/>
</dbReference>
<dbReference type="CDD" id="cd00104">
    <property type="entry name" value="KAZAL_FS"/>
    <property type="match status" value="1"/>
</dbReference>
<dbReference type="CDD" id="cd00191">
    <property type="entry name" value="TY"/>
    <property type="match status" value="1"/>
</dbReference>
<dbReference type="FunFam" id="1.10.238.10:FF:000101">
    <property type="entry name" value="SPARC/osteonectin, cwcv and kazal-like domains proteoglycan 2"/>
    <property type="match status" value="1"/>
</dbReference>
<dbReference type="FunFam" id="3.30.60.30:FF:000003">
    <property type="entry name" value="SPARC/osteonectin, cwcv and kazal-like domains proteoglycan 3"/>
    <property type="match status" value="1"/>
</dbReference>
<dbReference type="FunFam" id="4.10.800.10:FF:000001">
    <property type="entry name" value="Testican-3 isoform 2"/>
    <property type="match status" value="1"/>
</dbReference>
<dbReference type="Gene3D" id="3.30.60.30">
    <property type="match status" value="1"/>
</dbReference>
<dbReference type="Gene3D" id="1.10.238.10">
    <property type="entry name" value="EF-hand"/>
    <property type="match status" value="1"/>
</dbReference>
<dbReference type="Gene3D" id="4.10.800.10">
    <property type="entry name" value="Thyroglobulin type-1"/>
    <property type="match status" value="1"/>
</dbReference>
<dbReference type="InterPro" id="IPR011992">
    <property type="entry name" value="EF-hand-dom_pair"/>
</dbReference>
<dbReference type="InterPro" id="IPR002350">
    <property type="entry name" value="Kazal_dom"/>
</dbReference>
<dbReference type="InterPro" id="IPR036058">
    <property type="entry name" value="Kazal_dom_sf"/>
</dbReference>
<dbReference type="InterPro" id="IPR019577">
    <property type="entry name" value="SPARC/Testican_Ca-bd-dom"/>
</dbReference>
<dbReference type="InterPro" id="IPR000716">
    <property type="entry name" value="Thyroglobulin_1"/>
</dbReference>
<dbReference type="InterPro" id="IPR036857">
    <property type="entry name" value="Thyroglobulin_1_sf"/>
</dbReference>
<dbReference type="PANTHER" id="PTHR13866">
    <property type="entry name" value="SPARC OSTEONECTIN"/>
    <property type="match status" value="1"/>
</dbReference>
<dbReference type="PANTHER" id="PTHR13866:SF18">
    <property type="entry name" value="TESTICAN-2"/>
    <property type="match status" value="1"/>
</dbReference>
<dbReference type="Pfam" id="PF07648">
    <property type="entry name" value="Kazal_2"/>
    <property type="match status" value="1"/>
</dbReference>
<dbReference type="Pfam" id="PF10591">
    <property type="entry name" value="SPARC_Ca_bdg"/>
    <property type="match status" value="1"/>
</dbReference>
<dbReference type="Pfam" id="PF00086">
    <property type="entry name" value="Thyroglobulin_1"/>
    <property type="match status" value="1"/>
</dbReference>
<dbReference type="SMART" id="SM00280">
    <property type="entry name" value="KAZAL"/>
    <property type="match status" value="1"/>
</dbReference>
<dbReference type="SMART" id="SM00211">
    <property type="entry name" value="TY"/>
    <property type="match status" value="1"/>
</dbReference>
<dbReference type="SUPFAM" id="SSF47473">
    <property type="entry name" value="EF-hand"/>
    <property type="match status" value="1"/>
</dbReference>
<dbReference type="SUPFAM" id="SSF100895">
    <property type="entry name" value="Kazal-type serine protease inhibitors"/>
    <property type="match status" value="1"/>
</dbReference>
<dbReference type="SUPFAM" id="SSF57610">
    <property type="entry name" value="Thyroglobulin type-1 domain"/>
    <property type="match status" value="1"/>
</dbReference>
<dbReference type="PROSITE" id="PS51465">
    <property type="entry name" value="KAZAL_2"/>
    <property type="match status" value="1"/>
</dbReference>
<dbReference type="PROSITE" id="PS00484">
    <property type="entry name" value="THYROGLOBULIN_1_1"/>
    <property type="match status" value="1"/>
</dbReference>
<dbReference type="PROSITE" id="PS51162">
    <property type="entry name" value="THYROGLOBULIN_1_2"/>
    <property type="match status" value="1"/>
</dbReference>
<proteinExistence type="evidence at protein level"/>
<gene>
    <name type="primary">SPOCK2</name>
    <name type="synonym">KIAA0275</name>
    <name type="synonym">TICN2</name>
    <name type="ORF">UNQ269/PRO306</name>
</gene>
<reference key="1">
    <citation type="journal article" date="1999" name="J. Neurochem.">
        <title>Molecular cloning of testican-2: defining a novel calcium-binding proteoglycan family expressed in brain.</title>
        <authorList>
            <person name="Vannahme C."/>
            <person name="Schuebel S."/>
            <person name="Herud M."/>
            <person name="Goesling S."/>
            <person name="Hulsmann H."/>
            <person name="Paulsson M."/>
            <person name="Hartmann U."/>
            <person name="Maurer P."/>
        </authorList>
    </citation>
    <scope>NUCLEOTIDE SEQUENCE [MRNA] (ISOFORM 1)</scope>
    <scope>TISSUE SPECIFICITY</scope>
    <scope>CALCIUM-BINDING</scope>
    <source>
        <tissue>Brain</tissue>
    </source>
</reference>
<reference key="2">
    <citation type="journal article" date="1996" name="DNA Res.">
        <title>Prediction of the coding sequences of unidentified human genes. VI. The coding sequences of 80 new genes (KIAA0201-KIAA0280) deduced by analysis of cDNA clones from cell line KG-1 and brain.</title>
        <authorList>
            <person name="Nagase T."/>
            <person name="Seki N."/>
            <person name="Ishikawa K."/>
            <person name="Ohira M."/>
            <person name="Kawarabayasi Y."/>
            <person name="Ohara O."/>
            <person name="Tanaka A."/>
            <person name="Kotani H."/>
            <person name="Miyajima N."/>
            <person name="Nomura N."/>
        </authorList>
    </citation>
    <scope>NUCLEOTIDE SEQUENCE [LARGE SCALE MRNA] (ISOFORM 1)</scope>
    <source>
        <tissue>Brain</tissue>
    </source>
</reference>
<reference key="3">
    <citation type="journal article" date="2003" name="Genome Res.">
        <title>The secreted protein discovery initiative (SPDI), a large-scale effort to identify novel human secreted and transmembrane proteins: a bioinformatics assessment.</title>
        <authorList>
            <person name="Clark H.F."/>
            <person name="Gurney A.L."/>
            <person name="Abaya E."/>
            <person name="Baker K."/>
            <person name="Baldwin D.T."/>
            <person name="Brush J."/>
            <person name="Chen J."/>
            <person name="Chow B."/>
            <person name="Chui C."/>
            <person name="Crowley C."/>
            <person name="Currell B."/>
            <person name="Deuel B."/>
            <person name="Dowd P."/>
            <person name="Eaton D."/>
            <person name="Foster J.S."/>
            <person name="Grimaldi C."/>
            <person name="Gu Q."/>
            <person name="Hass P.E."/>
            <person name="Heldens S."/>
            <person name="Huang A."/>
            <person name="Kim H.S."/>
            <person name="Klimowski L."/>
            <person name="Jin Y."/>
            <person name="Johnson S."/>
            <person name="Lee J."/>
            <person name="Lewis L."/>
            <person name="Liao D."/>
            <person name="Mark M.R."/>
            <person name="Robbie E."/>
            <person name="Sanchez C."/>
            <person name="Schoenfeld J."/>
            <person name="Seshagiri S."/>
            <person name="Simmons L."/>
            <person name="Singh J."/>
            <person name="Smith V."/>
            <person name="Stinson J."/>
            <person name="Vagts A."/>
            <person name="Vandlen R.L."/>
            <person name="Watanabe C."/>
            <person name="Wieand D."/>
            <person name="Woods K."/>
            <person name="Xie M.-H."/>
            <person name="Yansura D.G."/>
            <person name="Yi S."/>
            <person name="Yu G."/>
            <person name="Yuan J."/>
            <person name="Zhang M."/>
            <person name="Zhang Z."/>
            <person name="Goddard A.D."/>
            <person name="Wood W.I."/>
            <person name="Godowski P.J."/>
            <person name="Gray A.M."/>
        </authorList>
    </citation>
    <scope>NUCLEOTIDE SEQUENCE [LARGE SCALE MRNA] (ISOFORM 1)</scope>
</reference>
<reference key="4">
    <citation type="journal article" date="2004" name="Nat. Genet.">
        <title>Complete sequencing and characterization of 21,243 full-length human cDNAs.</title>
        <authorList>
            <person name="Ota T."/>
            <person name="Suzuki Y."/>
            <person name="Nishikawa T."/>
            <person name="Otsuki T."/>
            <person name="Sugiyama T."/>
            <person name="Irie R."/>
            <person name="Wakamatsu A."/>
            <person name="Hayashi K."/>
            <person name="Sato H."/>
            <person name="Nagai K."/>
            <person name="Kimura K."/>
            <person name="Makita H."/>
            <person name="Sekine M."/>
            <person name="Obayashi M."/>
            <person name="Nishi T."/>
            <person name="Shibahara T."/>
            <person name="Tanaka T."/>
            <person name="Ishii S."/>
            <person name="Yamamoto J."/>
            <person name="Saito K."/>
            <person name="Kawai Y."/>
            <person name="Isono Y."/>
            <person name="Nakamura Y."/>
            <person name="Nagahari K."/>
            <person name="Murakami K."/>
            <person name="Yasuda T."/>
            <person name="Iwayanagi T."/>
            <person name="Wagatsuma M."/>
            <person name="Shiratori A."/>
            <person name="Sudo H."/>
            <person name="Hosoiri T."/>
            <person name="Kaku Y."/>
            <person name="Kodaira H."/>
            <person name="Kondo H."/>
            <person name="Sugawara M."/>
            <person name="Takahashi M."/>
            <person name="Kanda K."/>
            <person name="Yokoi T."/>
            <person name="Furuya T."/>
            <person name="Kikkawa E."/>
            <person name="Omura Y."/>
            <person name="Abe K."/>
            <person name="Kamihara K."/>
            <person name="Katsuta N."/>
            <person name="Sato K."/>
            <person name="Tanikawa M."/>
            <person name="Yamazaki M."/>
            <person name="Ninomiya K."/>
            <person name="Ishibashi T."/>
            <person name="Yamashita H."/>
            <person name="Murakawa K."/>
            <person name="Fujimori K."/>
            <person name="Tanai H."/>
            <person name="Kimata M."/>
            <person name="Watanabe M."/>
            <person name="Hiraoka S."/>
            <person name="Chiba Y."/>
            <person name="Ishida S."/>
            <person name="Ono Y."/>
            <person name="Takiguchi S."/>
            <person name="Watanabe S."/>
            <person name="Yosida M."/>
            <person name="Hotuta T."/>
            <person name="Kusano J."/>
            <person name="Kanehori K."/>
            <person name="Takahashi-Fujii A."/>
            <person name="Hara H."/>
            <person name="Tanase T.-O."/>
            <person name="Nomura Y."/>
            <person name="Togiya S."/>
            <person name="Komai F."/>
            <person name="Hara R."/>
            <person name="Takeuchi K."/>
            <person name="Arita M."/>
            <person name="Imose N."/>
            <person name="Musashino K."/>
            <person name="Yuuki H."/>
            <person name="Oshima A."/>
            <person name="Sasaki N."/>
            <person name="Aotsuka S."/>
            <person name="Yoshikawa Y."/>
            <person name="Matsunawa H."/>
            <person name="Ichihara T."/>
            <person name="Shiohata N."/>
            <person name="Sano S."/>
            <person name="Moriya S."/>
            <person name="Momiyama H."/>
            <person name="Satoh N."/>
            <person name="Takami S."/>
            <person name="Terashima Y."/>
            <person name="Suzuki O."/>
            <person name="Nakagawa S."/>
            <person name="Senoh A."/>
            <person name="Mizoguchi H."/>
            <person name="Goto Y."/>
            <person name="Shimizu F."/>
            <person name="Wakebe H."/>
            <person name="Hishigaki H."/>
            <person name="Watanabe T."/>
            <person name="Sugiyama A."/>
            <person name="Takemoto M."/>
            <person name="Kawakami B."/>
            <person name="Yamazaki M."/>
            <person name="Watanabe K."/>
            <person name="Kumagai A."/>
            <person name="Itakura S."/>
            <person name="Fukuzumi Y."/>
            <person name="Fujimori Y."/>
            <person name="Komiyama M."/>
            <person name="Tashiro H."/>
            <person name="Tanigami A."/>
            <person name="Fujiwara T."/>
            <person name="Ono T."/>
            <person name="Yamada K."/>
            <person name="Fujii Y."/>
            <person name="Ozaki K."/>
            <person name="Hirao M."/>
            <person name="Ohmori Y."/>
            <person name="Kawabata A."/>
            <person name="Hikiji T."/>
            <person name="Kobatake N."/>
            <person name="Inagaki H."/>
            <person name="Ikema Y."/>
            <person name="Okamoto S."/>
            <person name="Okitani R."/>
            <person name="Kawakami T."/>
            <person name="Noguchi S."/>
            <person name="Itoh T."/>
            <person name="Shigeta K."/>
            <person name="Senba T."/>
            <person name="Matsumura K."/>
            <person name="Nakajima Y."/>
            <person name="Mizuno T."/>
            <person name="Morinaga M."/>
            <person name="Sasaki M."/>
            <person name="Togashi T."/>
            <person name="Oyama M."/>
            <person name="Hata H."/>
            <person name="Watanabe M."/>
            <person name="Komatsu T."/>
            <person name="Mizushima-Sugano J."/>
            <person name="Satoh T."/>
            <person name="Shirai Y."/>
            <person name="Takahashi Y."/>
            <person name="Nakagawa K."/>
            <person name="Okumura K."/>
            <person name="Nagase T."/>
            <person name="Nomura N."/>
            <person name="Kikuchi H."/>
            <person name="Masuho Y."/>
            <person name="Yamashita R."/>
            <person name="Nakai K."/>
            <person name="Yada T."/>
            <person name="Nakamura Y."/>
            <person name="Ohara O."/>
            <person name="Isogai T."/>
            <person name="Sugano S."/>
        </authorList>
    </citation>
    <scope>NUCLEOTIDE SEQUENCE [LARGE SCALE MRNA] (ISOFORM 2)</scope>
    <source>
        <tissue>Amygdala</tissue>
    </source>
</reference>
<reference key="5">
    <citation type="journal article" date="2004" name="Nature">
        <title>The DNA sequence and comparative analysis of human chromosome 10.</title>
        <authorList>
            <person name="Deloukas P."/>
            <person name="Earthrowl M.E."/>
            <person name="Grafham D.V."/>
            <person name="Rubenfield M."/>
            <person name="French L."/>
            <person name="Steward C.A."/>
            <person name="Sims S.K."/>
            <person name="Jones M.C."/>
            <person name="Searle S."/>
            <person name="Scott C."/>
            <person name="Howe K."/>
            <person name="Hunt S.E."/>
            <person name="Andrews T.D."/>
            <person name="Gilbert J.G.R."/>
            <person name="Swarbreck D."/>
            <person name="Ashurst J.L."/>
            <person name="Taylor A."/>
            <person name="Battles J."/>
            <person name="Bird C.P."/>
            <person name="Ainscough R."/>
            <person name="Almeida J.P."/>
            <person name="Ashwell R.I.S."/>
            <person name="Ambrose K.D."/>
            <person name="Babbage A.K."/>
            <person name="Bagguley C.L."/>
            <person name="Bailey J."/>
            <person name="Banerjee R."/>
            <person name="Bates K."/>
            <person name="Beasley H."/>
            <person name="Bray-Allen S."/>
            <person name="Brown A.J."/>
            <person name="Brown J.Y."/>
            <person name="Burford D.C."/>
            <person name="Burrill W."/>
            <person name="Burton J."/>
            <person name="Cahill P."/>
            <person name="Camire D."/>
            <person name="Carter N.P."/>
            <person name="Chapman J.C."/>
            <person name="Clark S.Y."/>
            <person name="Clarke G."/>
            <person name="Clee C.M."/>
            <person name="Clegg S."/>
            <person name="Corby N."/>
            <person name="Coulson A."/>
            <person name="Dhami P."/>
            <person name="Dutta I."/>
            <person name="Dunn M."/>
            <person name="Faulkner L."/>
            <person name="Frankish A."/>
            <person name="Frankland J.A."/>
            <person name="Garner P."/>
            <person name="Garnett J."/>
            <person name="Gribble S."/>
            <person name="Griffiths C."/>
            <person name="Grocock R."/>
            <person name="Gustafson E."/>
            <person name="Hammond S."/>
            <person name="Harley J.L."/>
            <person name="Hart E."/>
            <person name="Heath P.D."/>
            <person name="Ho T.P."/>
            <person name="Hopkins B."/>
            <person name="Horne J."/>
            <person name="Howden P.J."/>
            <person name="Huckle E."/>
            <person name="Hynds C."/>
            <person name="Johnson C."/>
            <person name="Johnson D."/>
            <person name="Kana A."/>
            <person name="Kay M."/>
            <person name="Kimberley A.M."/>
            <person name="Kershaw J.K."/>
            <person name="Kokkinaki M."/>
            <person name="Laird G.K."/>
            <person name="Lawlor S."/>
            <person name="Lee H.M."/>
            <person name="Leongamornlert D.A."/>
            <person name="Laird G."/>
            <person name="Lloyd C."/>
            <person name="Lloyd D.M."/>
            <person name="Loveland J."/>
            <person name="Lovell J."/>
            <person name="McLaren S."/>
            <person name="McLay K.E."/>
            <person name="McMurray A."/>
            <person name="Mashreghi-Mohammadi M."/>
            <person name="Matthews L."/>
            <person name="Milne S."/>
            <person name="Nickerson T."/>
            <person name="Nguyen M."/>
            <person name="Overton-Larty E."/>
            <person name="Palmer S.A."/>
            <person name="Pearce A.V."/>
            <person name="Peck A.I."/>
            <person name="Pelan S."/>
            <person name="Phillimore B."/>
            <person name="Porter K."/>
            <person name="Rice C.M."/>
            <person name="Rogosin A."/>
            <person name="Ross M.T."/>
            <person name="Sarafidou T."/>
            <person name="Sehra H.K."/>
            <person name="Shownkeen R."/>
            <person name="Skuce C.D."/>
            <person name="Smith M."/>
            <person name="Standring L."/>
            <person name="Sycamore N."/>
            <person name="Tester J."/>
            <person name="Thorpe A."/>
            <person name="Torcasso W."/>
            <person name="Tracey A."/>
            <person name="Tromans A."/>
            <person name="Tsolas J."/>
            <person name="Wall M."/>
            <person name="Walsh J."/>
            <person name="Wang H."/>
            <person name="Weinstock K."/>
            <person name="West A.P."/>
            <person name="Willey D.L."/>
            <person name="Whitehead S.L."/>
            <person name="Wilming L."/>
            <person name="Wray P.W."/>
            <person name="Young L."/>
            <person name="Chen Y."/>
            <person name="Lovering R.C."/>
            <person name="Moschonas N.K."/>
            <person name="Siebert R."/>
            <person name="Fechtel K."/>
            <person name="Bentley D."/>
            <person name="Durbin R.M."/>
            <person name="Hubbard T."/>
            <person name="Doucette-Stamm L."/>
            <person name="Beck S."/>
            <person name="Smith D.R."/>
            <person name="Rogers J."/>
        </authorList>
    </citation>
    <scope>NUCLEOTIDE SEQUENCE [LARGE SCALE GENOMIC DNA]</scope>
</reference>
<reference key="6">
    <citation type="journal article" date="2004" name="Genome Res.">
        <title>The status, quality, and expansion of the NIH full-length cDNA project: the Mammalian Gene Collection (MGC).</title>
        <authorList>
            <consortium name="The MGC Project Team"/>
        </authorList>
    </citation>
    <scope>NUCLEOTIDE SEQUENCE [LARGE SCALE MRNA] (ISOFORM 1)</scope>
    <source>
        <tissue>Muscle</tissue>
    </source>
</reference>
<reference key="7">
    <citation type="journal article" date="2004" name="Protein Sci.">
        <title>Signal peptide prediction based on analysis of experimentally verified cleavage sites.</title>
        <authorList>
            <person name="Zhang Z."/>
            <person name="Henzel W.J."/>
        </authorList>
    </citation>
    <scope>PROTEIN SEQUENCE OF 23-37</scope>
</reference>
<reference key="8">
    <citation type="journal article" date="2015" name="Cell">
        <title>A single kinase generates the majority of the secreted phosphoproteome.</title>
        <authorList>
            <person name="Tagliabracci V.S."/>
            <person name="Wiley S.E."/>
            <person name="Guo X."/>
            <person name="Kinch L.N."/>
            <person name="Durrant E."/>
            <person name="Wen J."/>
            <person name="Xiao J."/>
            <person name="Cui J."/>
            <person name="Nguyen K.B."/>
            <person name="Engel J.L."/>
            <person name="Coon J.J."/>
            <person name="Grishin N."/>
            <person name="Pinna L.A."/>
            <person name="Pagliarini D.J."/>
            <person name="Dixon J.E."/>
        </authorList>
    </citation>
    <scope>PHOSPHORYLATION AT SER-72</scope>
</reference>
<keyword id="KW-0025">Alternative splicing</keyword>
<keyword id="KW-0106">Calcium</keyword>
<keyword id="KW-0903">Direct protein sequencing</keyword>
<keyword id="KW-1015">Disulfide bond</keyword>
<keyword id="KW-0272">Extracellular matrix</keyword>
<keyword id="KW-0325">Glycoprotein</keyword>
<keyword id="KW-0357">Heparan sulfate</keyword>
<keyword id="KW-0597">Phosphoprotein</keyword>
<keyword id="KW-0654">Proteoglycan</keyword>
<keyword id="KW-1267">Proteomics identification</keyword>
<keyword id="KW-1185">Reference proteome</keyword>
<keyword id="KW-0964">Secreted</keyword>
<keyword id="KW-0732">Signal</keyword>